<keyword id="KW-0021">Allosteric enzyme</keyword>
<keyword id="KW-0067">ATP-binding</keyword>
<keyword id="KW-0963">Cytoplasm</keyword>
<keyword id="KW-0418">Kinase</keyword>
<keyword id="KW-0547">Nucleotide-binding</keyword>
<keyword id="KW-0665">Pyrimidine biosynthesis</keyword>
<keyword id="KW-0808">Transferase</keyword>
<organism>
    <name type="scientific">Thermotoga petrophila (strain ATCC BAA-488 / DSM 13995 / JCM 10881 / RKU-1)</name>
    <dbReference type="NCBI Taxonomy" id="390874"/>
    <lineage>
        <taxon>Bacteria</taxon>
        <taxon>Thermotogati</taxon>
        <taxon>Thermotogota</taxon>
        <taxon>Thermotogae</taxon>
        <taxon>Thermotogales</taxon>
        <taxon>Thermotogaceae</taxon>
        <taxon>Thermotoga</taxon>
    </lineage>
</organism>
<dbReference type="EC" id="2.7.4.22" evidence="1"/>
<dbReference type="EMBL" id="CP000702">
    <property type="protein sequence ID" value="ABQ47202.1"/>
    <property type="molecule type" value="Genomic_DNA"/>
</dbReference>
<dbReference type="RefSeq" id="WP_011943707.1">
    <property type="nucleotide sequence ID" value="NC_009486.1"/>
</dbReference>
<dbReference type="SMR" id="A5ILX9"/>
<dbReference type="STRING" id="390874.Tpet_1188"/>
<dbReference type="KEGG" id="tpt:Tpet_1188"/>
<dbReference type="eggNOG" id="COG0528">
    <property type="taxonomic scope" value="Bacteria"/>
</dbReference>
<dbReference type="HOGENOM" id="CLU_033861_0_0_0"/>
<dbReference type="UniPathway" id="UPA00159">
    <property type="reaction ID" value="UER00275"/>
</dbReference>
<dbReference type="Proteomes" id="UP000006558">
    <property type="component" value="Chromosome"/>
</dbReference>
<dbReference type="GO" id="GO:0005737">
    <property type="term" value="C:cytoplasm"/>
    <property type="evidence" value="ECO:0007669"/>
    <property type="project" value="UniProtKB-SubCell"/>
</dbReference>
<dbReference type="GO" id="GO:0005524">
    <property type="term" value="F:ATP binding"/>
    <property type="evidence" value="ECO:0007669"/>
    <property type="project" value="UniProtKB-KW"/>
</dbReference>
<dbReference type="GO" id="GO:0033862">
    <property type="term" value="F:UMP kinase activity"/>
    <property type="evidence" value="ECO:0007669"/>
    <property type="project" value="UniProtKB-EC"/>
</dbReference>
<dbReference type="GO" id="GO:0044210">
    <property type="term" value="P:'de novo' CTP biosynthetic process"/>
    <property type="evidence" value="ECO:0007669"/>
    <property type="project" value="UniProtKB-UniRule"/>
</dbReference>
<dbReference type="GO" id="GO:0006225">
    <property type="term" value="P:UDP biosynthetic process"/>
    <property type="evidence" value="ECO:0007669"/>
    <property type="project" value="TreeGrafter"/>
</dbReference>
<dbReference type="CDD" id="cd04254">
    <property type="entry name" value="AAK_UMPK-PyrH-Ec"/>
    <property type="match status" value="1"/>
</dbReference>
<dbReference type="FunFam" id="3.40.1160.10:FF:000001">
    <property type="entry name" value="Uridylate kinase"/>
    <property type="match status" value="1"/>
</dbReference>
<dbReference type="Gene3D" id="3.40.1160.10">
    <property type="entry name" value="Acetylglutamate kinase-like"/>
    <property type="match status" value="1"/>
</dbReference>
<dbReference type="HAMAP" id="MF_01220_B">
    <property type="entry name" value="PyrH_B"/>
    <property type="match status" value="1"/>
</dbReference>
<dbReference type="InterPro" id="IPR036393">
    <property type="entry name" value="AceGlu_kinase-like_sf"/>
</dbReference>
<dbReference type="InterPro" id="IPR001048">
    <property type="entry name" value="Asp/Glu/Uridylate_kinase"/>
</dbReference>
<dbReference type="InterPro" id="IPR011817">
    <property type="entry name" value="Uridylate_kinase"/>
</dbReference>
<dbReference type="InterPro" id="IPR015963">
    <property type="entry name" value="Uridylate_kinase_bac"/>
</dbReference>
<dbReference type="NCBIfam" id="TIGR02075">
    <property type="entry name" value="pyrH_bact"/>
    <property type="match status" value="1"/>
</dbReference>
<dbReference type="PANTHER" id="PTHR42833">
    <property type="entry name" value="URIDYLATE KINASE"/>
    <property type="match status" value="1"/>
</dbReference>
<dbReference type="PANTHER" id="PTHR42833:SF4">
    <property type="entry name" value="URIDYLATE KINASE PUMPKIN, CHLOROPLASTIC"/>
    <property type="match status" value="1"/>
</dbReference>
<dbReference type="Pfam" id="PF00696">
    <property type="entry name" value="AA_kinase"/>
    <property type="match status" value="1"/>
</dbReference>
<dbReference type="PIRSF" id="PIRSF005650">
    <property type="entry name" value="Uridylate_kin"/>
    <property type="match status" value="1"/>
</dbReference>
<dbReference type="SUPFAM" id="SSF53633">
    <property type="entry name" value="Carbamate kinase-like"/>
    <property type="match status" value="1"/>
</dbReference>
<protein>
    <recommendedName>
        <fullName evidence="1">Uridylate kinase</fullName>
        <shortName evidence="1">UK</shortName>
        <ecNumber evidence="1">2.7.4.22</ecNumber>
    </recommendedName>
    <alternativeName>
        <fullName evidence="1">Uridine monophosphate kinase</fullName>
        <shortName evidence="1">UMP kinase</shortName>
        <shortName evidence="1">UMPK</shortName>
    </alternativeName>
</protein>
<accession>A5ILX9</accession>
<reference key="1">
    <citation type="submission" date="2007-05" db="EMBL/GenBank/DDBJ databases">
        <title>Complete sequence of Thermotoga petrophila RKU-1.</title>
        <authorList>
            <consortium name="US DOE Joint Genome Institute"/>
            <person name="Copeland A."/>
            <person name="Lucas S."/>
            <person name="Lapidus A."/>
            <person name="Barry K."/>
            <person name="Glavina del Rio T."/>
            <person name="Dalin E."/>
            <person name="Tice H."/>
            <person name="Pitluck S."/>
            <person name="Sims D."/>
            <person name="Brettin T."/>
            <person name="Bruce D."/>
            <person name="Detter J.C."/>
            <person name="Han C."/>
            <person name="Tapia R."/>
            <person name="Schmutz J."/>
            <person name="Larimer F."/>
            <person name="Land M."/>
            <person name="Hauser L."/>
            <person name="Kyrpides N."/>
            <person name="Mikhailova N."/>
            <person name="Nelson K."/>
            <person name="Gogarten J.P."/>
            <person name="Noll K."/>
            <person name="Richardson P."/>
        </authorList>
    </citation>
    <scope>NUCLEOTIDE SEQUENCE [LARGE SCALE GENOMIC DNA]</scope>
    <source>
        <strain>ATCC BAA-488 / DSM 13995 / JCM 10881 / RKU-1</strain>
    </source>
</reference>
<evidence type="ECO:0000255" key="1">
    <source>
        <dbReference type="HAMAP-Rule" id="MF_01220"/>
    </source>
</evidence>
<proteinExistence type="inferred from homology"/>
<feature type="chain" id="PRO_1000054045" description="Uridylate kinase">
    <location>
        <begin position="1"/>
        <end position="231"/>
    </location>
</feature>
<feature type="region of interest" description="Involved in allosteric activation by GTP" evidence="1">
    <location>
        <begin position="14"/>
        <end position="19"/>
    </location>
</feature>
<feature type="binding site" evidence="1">
    <location>
        <begin position="6"/>
        <end position="9"/>
    </location>
    <ligand>
        <name>ATP</name>
        <dbReference type="ChEBI" id="CHEBI:30616"/>
    </ligand>
</feature>
<feature type="binding site" evidence="1">
    <location>
        <position position="49"/>
    </location>
    <ligand>
        <name>ATP</name>
        <dbReference type="ChEBI" id="CHEBI:30616"/>
    </ligand>
</feature>
<feature type="binding site" evidence="1">
    <location>
        <position position="53"/>
    </location>
    <ligand>
        <name>ATP</name>
        <dbReference type="ChEBI" id="CHEBI:30616"/>
    </ligand>
</feature>
<feature type="binding site" evidence="1">
    <location>
        <position position="66"/>
    </location>
    <ligand>
        <name>UMP</name>
        <dbReference type="ChEBI" id="CHEBI:57865"/>
    </ligand>
</feature>
<feature type="binding site" evidence="1">
    <location>
        <begin position="127"/>
        <end position="134"/>
    </location>
    <ligand>
        <name>UMP</name>
        <dbReference type="ChEBI" id="CHEBI:57865"/>
    </ligand>
</feature>
<feature type="binding site" evidence="1">
    <location>
        <position position="154"/>
    </location>
    <ligand>
        <name>ATP</name>
        <dbReference type="ChEBI" id="CHEBI:30616"/>
    </ligand>
</feature>
<feature type="binding site" evidence="1">
    <location>
        <position position="160"/>
    </location>
    <ligand>
        <name>ATP</name>
        <dbReference type="ChEBI" id="CHEBI:30616"/>
    </ligand>
</feature>
<feature type="binding site" evidence="1">
    <location>
        <position position="163"/>
    </location>
    <ligand>
        <name>ATP</name>
        <dbReference type="ChEBI" id="CHEBI:30616"/>
    </ligand>
</feature>
<comment type="function">
    <text evidence="1">Catalyzes the reversible phosphorylation of UMP to UDP.</text>
</comment>
<comment type="catalytic activity">
    <reaction evidence="1">
        <text>UMP + ATP = UDP + ADP</text>
        <dbReference type="Rhea" id="RHEA:24400"/>
        <dbReference type="ChEBI" id="CHEBI:30616"/>
        <dbReference type="ChEBI" id="CHEBI:57865"/>
        <dbReference type="ChEBI" id="CHEBI:58223"/>
        <dbReference type="ChEBI" id="CHEBI:456216"/>
        <dbReference type="EC" id="2.7.4.22"/>
    </reaction>
</comment>
<comment type="activity regulation">
    <text evidence="1">Allosterically activated by GTP. Inhibited by UTP.</text>
</comment>
<comment type="pathway">
    <text evidence="1">Pyrimidine metabolism; CTP biosynthesis via de novo pathway; UDP from UMP (UMPK route): step 1/1.</text>
</comment>
<comment type="subunit">
    <text evidence="1">Homohexamer.</text>
</comment>
<comment type="subcellular location">
    <subcellularLocation>
        <location evidence="1">Cytoplasm</location>
    </subcellularLocation>
</comment>
<comment type="similarity">
    <text evidence="1">Belongs to the UMP kinase family.</text>
</comment>
<name>PYRH_THEP1</name>
<gene>
    <name evidence="1" type="primary">pyrH</name>
    <name type="ordered locus">Tpet_1188</name>
</gene>
<sequence>MRVLVKLSGEALSGEGGRGFDPERVNYIVTEIKSVVEEGFKIGIVVGAGNLFRGVELKNLTMARADQIGLLGTVMNSVYLKDIFERSGLKARIYSQIVNLPDVERVNYDSIESALRENSILIFAGGTSNPFFTTDTAAVLRAQEMKAKLVVKATKVDGVYDKDPKKFPDAKKIPHLTFSEAMKMGLKVMDAEAFALCKKLGITVKVINFFEPGTLLKALKGEDVGSTVVPD</sequence>